<sequence>MANAVVAIAGSSGLIGSALTAALRAADHTVLRIVRRAPANSEELHWNPESGEFDPHALTDVDAVVNLCGVNIAQRRWSGAFKQSLRDSRITPTEVLSAAVADAGVATLINASAVGYYGNTKDRVVDENDSAGTGFLAQLCVDWETATRPAQQSGARVVLARTGVVLSPAGGMLRRMRPLFSVGLGARLGSGRQYMSWISLEDEVRALQFAIAQPNLSGPVNLTGPAPVTNAEFTTAFGRAVNRPTPLMLPSVAVRAAFGEFADEGLLIGQRAIPSALERAGFQFHHNTIGEALGYATTRPG</sequence>
<keyword id="KW-1185">Reference proteome</keyword>
<protein>
    <recommendedName>
        <fullName>Epimerase family protein MT2273</fullName>
    </recommendedName>
</protein>
<feature type="chain" id="PRO_0000428325" description="Epimerase family protein MT2273">
    <location>
        <begin position="1"/>
        <end position="301"/>
    </location>
</feature>
<reference key="1">
    <citation type="journal article" date="2002" name="J. Bacteriol.">
        <title>Whole-genome comparison of Mycobacterium tuberculosis clinical and laboratory strains.</title>
        <authorList>
            <person name="Fleischmann R.D."/>
            <person name="Alland D."/>
            <person name="Eisen J.A."/>
            <person name="Carpenter L."/>
            <person name="White O."/>
            <person name="Peterson J.D."/>
            <person name="DeBoy R.T."/>
            <person name="Dodson R.J."/>
            <person name="Gwinn M.L."/>
            <person name="Haft D.H."/>
            <person name="Hickey E.K."/>
            <person name="Kolonay J.F."/>
            <person name="Nelson W.C."/>
            <person name="Umayam L.A."/>
            <person name="Ermolaeva M.D."/>
            <person name="Salzberg S.L."/>
            <person name="Delcher A."/>
            <person name="Utterback T.R."/>
            <person name="Weidman J.F."/>
            <person name="Khouri H.M."/>
            <person name="Gill J."/>
            <person name="Mikula A."/>
            <person name="Bishai W."/>
            <person name="Jacobs W.R. Jr."/>
            <person name="Venter J.C."/>
            <person name="Fraser C.M."/>
        </authorList>
    </citation>
    <scope>NUCLEOTIDE SEQUENCE [LARGE SCALE GENOMIC DNA]</scope>
    <source>
        <strain>CDC 1551 / Oshkosh</strain>
    </source>
</reference>
<proteinExistence type="inferred from homology"/>
<evidence type="ECO:0000305" key="1"/>
<gene>
    <name type="ordered locus">MT2273</name>
</gene>
<accession>P9WGP6</accession>
<accession>L0TAI8</accession>
<accession>P67232</accession>
<accession>Q10403</accession>
<comment type="similarity">
    <text evidence="1">Belongs to the NAD(P)-dependent epimerase/dehydratase family. SDR39U1 subfamily.</text>
</comment>
<comment type="sequence caution" evidence="1">
    <conflict type="erroneous initiation">
        <sequence resource="EMBL-CDS" id="AAK46558"/>
    </conflict>
</comment>
<organism>
    <name type="scientific">Mycobacterium tuberculosis (strain CDC 1551 / Oshkosh)</name>
    <dbReference type="NCBI Taxonomy" id="83331"/>
    <lineage>
        <taxon>Bacteria</taxon>
        <taxon>Bacillati</taxon>
        <taxon>Actinomycetota</taxon>
        <taxon>Actinomycetes</taxon>
        <taxon>Mycobacteriales</taxon>
        <taxon>Mycobacteriaceae</taxon>
        <taxon>Mycobacterium</taxon>
        <taxon>Mycobacterium tuberculosis complex</taxon>
    </lineage>
</organism>
<name>Y2216_MYCTO</name>
<dbReference type="EMBL" id="AE000516">
    <property type="protein sequence ID" value="AAK46558.1"/>
    <property type="status" value="ALT_INIT"/>
    <property type="molecule type" value="Genomic_DNA"/>
</dbReference>
<dbReference type="PIR" id="A70787">
    <property type="entry name" value="A70787"/>
</dbReference>
<dbReference type="RefSeq" id="WP_003411454.1">
    <property type="nucleotide sequence ID" value="NZ_KK341227.1"/>
</dbReference>
<dbReference type="SMR" id="P9WGP6"/>
<dbReference type="KEGG" id="mtc:MT2273"/>
<dbReference type="PATRIC" id="fig|83331.31.peg.2447"/>
<dbReference type="HOGENOM" id="CLU_047373_0_2_11"/>
<dbReference type="Proteomes" id="UP000001020">
    <property type="component" value="Chromosome"/>
</dbReference>
<dbReference type="CDD" id="cd05242">
    <property type="entry name" value="SDR_a8"/>
    <property type="match status" value="1"/>
</dbReference>
<dbReference type="Gene3D" id="3.40.50.720">
    <property type="entry name" value="NAD(P)-binding Rossmann-like Domain"/>
    <property type="match status" value="1"/>
</dbReference>
<dbReference type="InterPro" id="IPR013549">
    <property type="entry name" value="DUF1731"/>
</dbReference>
<dbReference type="InterPro" id="IPR001509">
    <property type="entry name" value="Epimerase_deHydtase"/>
</dbReference>
<dbReference type="InterPro" id="IPR036291">
    <property type="entry name" value="NAD(P)-bd_dom_sf"/>
</dbReference>
<dbReference type="InterPro" id="IPR010099">
    <property type="entry name" value="SDR39U1"/>
</dbReference>
<dbReference type="NCBIfam" id="TIGR01777">
    <property type="entry name" value="yfcH"/>
    <property type="match status" value="1"/>
</dbReference>
<dbReference type="PANTHER" id="PTHR11092:SF0">
    <property type="entry name" value="EPIMERASE FAMILY PROTEIN SDR39U1"/>
    <property type="match status" value="1"/>
</dbReference>
<dbReference type="PANTHER" id="PTHR11092">
    <property type="entry name" value="SUGAR NUCLEOTIDE EPIMERASE RELATED"/>
    <property type="match status" value="1"/>
</dbReference>
<dbReference type="Pfam" id="PF08338">
    <property type="entry name" value="DUF1731"/>
    <property type="match status" value="1"/>
</dbReference>
<dbReference type="Pfam" id="PF01370">
    <property type="entry name" value="Epimerase"/>
    <property type="match status" value="1"/>
</dbReference>
<dbReference type="SUPFAM" id="SSF51735">
    <property type="entry name" value="NAD(P)-binding Rossmann-fold domains"/>
    <property type="match status" value="1"/>
</dbReference>